<keyword id="KW-0378">Hydrolase</keyword>
<keyword id="KW-0546">Nucleotide metabolism</keyword>
<keyword id="KW-0547">Nucleotide-binding</keyword>
<keyword id="KW-1185">Reference proteome</keyword>
<sequence>MGLKSDTWIKKMSKKGMIEPFCEKQVGKNIVSYGLSSYGYDIRVGNEFMIFTNIGANLVDPKSFDERNVVEITTEENGYCLVPPNSFALARTIEYFRIPRNVLAICLGKSTYARCGIIVNVTPFEPEFEGHITIEISNTTPLPAKIYANEGIAQVLFLEGDETCEVSYKDKKGKYQGQKGITLPKVIK</sequence>
<accession>Q7VJQ0</accession>
<feature type="chain" id="PRO_0000155989" description="dCTP deaminase">
    <location>
        <begin position="1"/>
        <end position="188"/>
    </location>
</feature>
<feature type="active site" description="Proton donor/acceptor" evidence="1">
    <location>
        <position position="135"/>
    </location>
</feature>
<feature type="binding site" evidence="1">
    <location>
        <begin position="109"/>
        <end position="114"/>
    </location>
    <ligand>
        <name>dCTP</name>
        <dbReference type="ChEBI" id="CHEBI:61481"/>
    </ligand>
</feature>
<feature type="binding site" evidence="1">
    <location>
        <position position="154"/>
    </location>
    <ligand>
        <name>dCTP</name>
        <dbReference type="ChEBI" id="CHEBI:61481"/>
    </ligand>
</feature>
<feature type="binding site" evidence="1">
    <location>
        <position position="168"/>
    </location>
    <ligand>
        <name>dCTP</name>
        <dbReference type="ChEBI" id="CHEBI:61481"/>
    </ligand>
</feature>
<feature type="binding site" evidence="1">
    <location>
        <position position="178"/>
    </location>
    <ligand>
        <name>dCTP</name>
        <dbReference type="ChEBI" id="CHEBI:61481"/>
    </ligand>
</feature>
<organism>
    <name type="scientific">Helicobacter hepaticus (strain ATCC 51449 / 3B1)</name>
    <dbReference type="NCBI Taxonomy" id="235279"/>
    <lineage>
        <taxon>Bacteria</taxon>
        <taxon>Pseudomonadati</taxon>
        <taxon>Campylobacterota</taxon>
        <taxon>Epsilonproteobacteria</taxon>
        <taxon>Campylobacterales</taxon>
        <taxon>Helicobacteraceae</taxon>
        <taxon>Helicobacter</taxon>
    </lineage>
</organism>
<reference key="1">
    <citation type="journal article" date="2003" name="Proc. Natl. Acad. Sci. U.S.A.">
        <title>The complete genome sequence of the carcinogenic bacterium Helicobacter hepaticus.</title>
        <authorList>
            <person name="Suerbaum S."/>
            <person name="Josenhans C."/>
            <person name="Sterzenbach T."/>
            <person name="Drescher B."/>
            <person name="Brandt P."/>
            <person name="Bell M."/>
            <person name="Droege M."/>
            <person name="Fartmann B."/>
            <person name="Fischer H.-P."/>
            <person name="Ge Z."/>
            <person name="Hoerster A."/>
            <person name="Holland R."/>
            <person name="Klein K."/>
            <person name="Koenig J."/>
            <person name="Macko L."/>
            <person name="Mendz G.L."/>
            <person name="Nyakatura G."/>
            <person name="Schauer D.B."/>
            <person name="Shen Z."/>
            <person name="Weber J."/>
            <person name="Frosch M."/>
            <person name="Fox J.G."/>
        </authorList>
    </citation>
    <scope>NUCLEOTIDE SEQUENCE [LARGE SCALE GENOMIC DNA]</scope>
    <source>
        <strain>ATCC 51449 / 3B1</strain>
    </source>
</reference>
<protein>
    <recommendedName>
        <fullName evidence="1">dCTP deaminase</fullName>
        <ecNumber evidence="1">3.5.4.13</ecNumber>
    </recommendedName>
    <alternativeName>
        <fullName evidence="1">Deoxycytidine triphosphate deaminase</fullName>
    </alternativeName>
</protein>
<name>DCD_HELHP</name>
<dbReference type="EC" id="3.5.4.13" evidence="1"/>
<dbReference type="EMBL" id="AE017125">
    <property type="protein sequence ID" value="AAP76790.1"/>
    <property type="status" value="ALT_INIT"/>
    <property type="molecule type" value="Genomic_DNA"/>
</dbReference>
<dbReference type="RefSeq" id="WP_011115036.1">
    <property type="nucleotide sequence ID" value="NC_004917.1"/>
</dbReference>
<dbReference type="SMR" id="Q7VJQ0"/>
<dbReference type="STRING" id="235279.HH_0193"/>
<dbReference type="KEGG" id="hhe:HH_0193"/>
<dbReference type="eggNOG" id="COG0717">
    <property type="taxonomic scope" value="Bacteria"/>
</dbReference>
<dbReference type="HOGENOM" id="CLU_087476_4_0_7"/>
<dbReference type="OrthoDB" id="9780956at2"/>
<dbReference type="UniPathway" id="UPA00610">
    <property type="reaction ID" value="UER00665"/>
</dbReference>
<dbReference type="Proteomes" id="UP000002495">
    <property type="component" value="Chromosome"/>
</dbReference>
<dbReference type="GO" id="GO:0008829">
    <property type="term" value="F:dCTP deaminase activity"/>
    <property type="evidence" value="ECO:0007669"/>
    <property type="project" value="UniProtKB-UniRule"/>
</dbReference>
<dbReference type="GO" id="GO:0000166">
    <property type="term" value="F:nucleotide binding"/>
    <property type="evidence" value="ECO:0007669"/>
    <property type="project" value="UniProtKB-KW"/>
</dbReference>
<dbReference type="GO" id="GO:0006226">
    <property type="term" value="P:dUMP biosynthetic process"/>
    <property type="evidence" value="ECO:0007669"/>
    <property type="project" value="UniProtKB-UniPathway"/>
</dbReference>
<dbReference type="GO" id="GO:0006229">
    <property type="term" value="P:dUTP biosynthetic process"/>
    <property type="evidence" value="ECO:0007669"/>
    <property type="project" value="UniProtKB-UniRule"/>
</dbReference>
<dbReference type="GO" id="GO:0015949">
    <property type="term" value="P:nucleobase-containing small molecule interconversion"/>
    <property type="evidence" value="ECO:0007669"/>
    <property type="project" value="TreeGrafter"/>
</dbReference>
<dbReference type="CDD" id="cd07557">
    <property type="entry name" value="trimeric_dUTPase"/>
    <property type="match status" value="1"/>
</dbReference>
<dbReference type="FunFam" id="2.70.40.10:FF:000006">
    <property type="entry name" value="dCTP deaminase"/>
    <property type="match status" value="1"/>
</dbReference>
<dbReference type="Gene3D" id="2.70.40.10">
    <property type="match status" value="1"/>
</dbReference>
<dbReference type="HAMAP" id="MF_00146">
    <property type="entry name" value="dCTP_deaminase"/>
    <property type="match status" value="1"/>
</dbReference>
<dbReference type="InterPro" id="IPR011962">
    <property type="entry name" value="dCTP_deaminase"/>
</dbReference>
<dbReference type="InterPro" id="IPR036157">
    <property type="entry name" value="dUTPase-like_sf"/>
</dbReference>
<dbReference type="InterPro" id="IPR033704">
    <property type="entry name" value="dUTPase_trimeric"/>
</dbReference>
<dbReference type="NCBIfam" id="TIGR02274">
    <property type="entry name" value="dCTP_deam"/>
    <property type="match status" value="1"/>
</dbReference>
<dbReference type="PANTHER" id="PTHR42680">
    <property type="entry name" value="DCTP DEAMINASE"/>
    <property type="match status" value="1"/>
</dbReference>
<dbReference type="PANTHER" id="PTHR42680:SF3">
    <property type="entry name" value="DCTP DEAMINASE"/>
    <property type="match status" value="1"/>
</dbReference>
<dbReference type="Pfam" id="PF22769">
    <property type="entry name" value="DCD"/>
    <property type="match status" value="1"/>
</dbReference>
<dbReference type="SUPFAM" id="SSF51283">
    <property type="entry name" value="dUTPase-like"/>
    <property type="match status" value="1"/>
</dbReference>
<comment type="function">
    <text evidence="1">Catalyzes the deamination of dCTP to dUTP.</text>
</comment>
<comment type="catalytic activity">
    <reaction evidence="1">
        <text>dCTP + H2O + H(+) = dUTP + NH4(+)</text>
        <dbReference type="Rhea" id="RHEA:22680"/>
        <dbReference type="ChEBI" id="CHEBI:15377"/>
        <dbReference type="ChEBI" id="CHEBI:15378"/>
        <dbReference type="ChEBI" id="CHEBI:28938"/>
        <dbReference type="ChEBI" id="CHEBI:61481"/>
        <dbReference type="ChEBI" id="CHEBI:61555"/>
        <dbReference type="EC" id="3.5.4.13"/>
    </reaction>
</comment>
<comment type="pathway">
    <text evidence="1">Pyrimidine metabolism; dUMP biosynthesis; dUMP from dCTP (dUTP route): step 1/2.</text>
</comment>
<comment type="subunit">
    <text evidence="1">Homotrimer.</text>
</comment>
<comment type="similarity">
    <text evidence="1">Belongs to the dCTP deaminase family.</text>
</comment>
<comment type="sequence caution" evidence="2">
    <conflict type="erroneous initiation">
        <sequence resource="EMBL-CDS" id="AAP76790"/>
    </conflict>
</comment>
<evidence type="ECO:0000255" key="1">
    <source>
        <dbReference type="HAMAP-Rule" id="MF_00146"/>
    </source>
</evidence>
<evidence type="ECO:0000305" key="2"/>
<proteinExistence type="inferred from homology"/>
<gene>
    <name evidence="1" type="primary">dcd</name>
    <name type="ordered locus">HH_0193</name>
</gene>